<protein>
    <recommendedName>
        <fullName>Uncharacterized protein MT1557</fullName>
    </recommendedName>
</protein>
<gene>
    <name type="ordered locus">MT1557</name>
</gene>
<reference key="1">
    <citation type="journal article" date="2002" name="J. Bacteriol.">
        <title>Whole-genome comparison of Mycobacterium tuberculosis clinical and laboratory strains.</title>
        <authorList>
            <person name="Fleischmann R.D."/>
            <person name="Alland D."/>
            <person name="Eisen J.A."/>
            <person name="Carpenter L."/>
            <person name="White O."/>
            <person name="Peterson J.D."/>
            <person name="DeBoy R.T."/>
            <person name="Dodson R.J."/>
            <person name="Gwinn M.L."/>
            <person name="Haft D.H."/>
            <person name="Hickey E.K."/>
            <person name="Kolonay J.F."/>
            <person name="Nelson W.C."/>
            <person name="Umayam L.A."/>
            <person name="Ermolaeva M.D."/>
            <person name="Salzberg S.L."/>
            <person name="Delcher A."/>
            <person name="Utterback T.R."/>
            <person name="Weidman J.F."/>
            <person name="Khouri H.M."/>
            <person name="Gill J."/>
            <person name="Mikula A."/>
            <person name="Bishai W."/>
            <person name="Jacobs W.R. Jr."/>
            <person name="Venter J.C."/>
            <person name="Fraser C.M."/>
        </authorList>
    </citation>
    <scope>NUCLEOTIDE SEQUENCE [LARGE SCALE GENOMIC DNA]</scope>
    <source>
        <strain>CDC 1551 / Oshkosh</strain>
    </source>
</reference>
<accession>P9WLW2</accession>
<accession>L0T9U6</accession>
<accession>P71788</accession>
<keyword id="KW-1185">Reference proteome</keyword>
<dbReference type="EMBL" id="AE000516">
    <property type="protein sequence ID" value="AAK45824.1"/>
    <property type="molecule type" value="Genomic_DNA"/>
</dbReference>
<dbReference type="PIR" id="H70713">
    <property type="entry name" value="H70713"/>
</dbReference>
<dbReference type="RefSeq" id="WP_003407632.1">
    <property type="nucleotide sequence ID" value="NZ_KK341227.1"/>
</dbReference>
<dbReference type="KEGG" id="mtc:MT1557"/>
<dbReference type="PATRIC" id="fig|83331.31.peg.1678"/>
<dbReference type="HOGENOM" id="CLU_082932_0_0_11"/>
<dbReference type="Proteomes" id="UP000001020">
    <property type="component" value="Chromosome"/>
</dbReference>
<dbReference type="CDD" id="cd02440">
    <property type="entry name" value="AdoMet_MTases"/>
    <property type="match status" value="1"/>
</dbReference>
<dbReference type="Gene3D" id="3.40.50.150">
    <property type="entry name" value="Vaccinia Virus protein VP39"/>
    <property type="match status" value="1"/>
</dbReference>
<dbReference type="InterPro" id="IPR029063">
    <property type="entry name" value="SAM-dependent_MTases_sf"/>
</dbReference>
<dbReference type="Pfam" id="PF13489">
    <property type="entry name" value="Methyltransf_23"/>
    <property type="match status" value="1"/>
</dbReference>
<dbReference type="SUPFAM" id="SSF53335">
    <property type="entry name" value="S-adenosyl-L-methionine-dependent methyltransferases"/>
    <property type="match status" value="1"/>
</dbReference>
<name>Y1509_MYCTO</name>
<feature type="chain" id="PRO_0000427409" description="Uncharacterized protein MT1557">
    <location>
        <begin position="1"/>
        <end position="293"/>
    </location>
</feature>
<organism>
    <name type="scientific">Mycobacterium tuberculosis (strain CDC 1551 / Oshkosh)</name>
    <dbReference type="NCBI Taxonomy" id="83331"/>
    <lineage>
        <taxon>Bacteria</taxon>
        <taxon>Bacillati</taxon>
        <taxon>Actinomycetota</taxon>
        <taxon>Actinomycetes</taxon>
        <taxon>Mycobacteriales</taxon>
        <taxon>Mycobacteriaceae</taxon>
        <taxon>Mycobacterium</taxon>
        <taxon>Mycobacterium tuberculosis complex</taxon>
    </lineage>
</organism>
<proteinExistence type="predicted"/>
<sequence length="293" mass="33055">MFALSNNLNRVNACMDGFLARIRSHVDAHAPELRSLFDTMAAEARFARDWLSEDLARLPVGAALLEVGGGVLLLSCQLAAEGFDITAIEPTGEGFGKFRQLGDIVLELAAARPTIAPCKAEDFISEKRFDFAFSLNVMEHIDLPDEAVRRVSEVLKPGASYHFLCPNYVFPYEPHFNIPTFFTKELTCRVMRHRIEGNTGMDDPKGVWRSLNWITVPKVKRFAAKDATLTLRFHRAMLVWMLERALTDKEFAGRRAQWMVAAIRSAVKLRVHHLAGYVPATLQPIMDVRLTKR</sequence>